<keyword id="KW-0963">Cytoplasm</keyword>
<keyword id="KW-0488">Methylation</keyword>
<keyword id="KW-0648">Protein biosynthesis</keyword>
<evidence type="ECO:0000255" key="1">
    <source>
        <dbReference type="HAMAP-Rule" id="MF_00093"/>
    </source>
</evidence>
<evidence type="ECO:0000256" key="2">
    <source>
        <dbReference type="SAM" id="MobiDB-lite"/>
    </source>
</evidence>
<protein>
    <recommendedName>
        <fullName evidence="1">Peptide chain release factor 1</fullName>
        <shortName evidence="1">RF-1</shortName>
    </recommendedName>
</protein>
<organism>
    <name type="scientific">Rickettsia peacockii (strain Rustic)</name>
    <dbReference type="NCBI Taxonomy" id="562019"/>
    <lineage>
        <taxon>Bacteria</taxon>
        <taxon>Pseudomonadati</taxon>
        <taxon>Pseudomonadota</taxon>
        <taxon>Alphaproteobacteria</taxon>
        <taxon>Rickettsiales</taxon>
        <taxon>Rickettsiaceae</taxon>
        <taxon>Rickettsieae</taxon>
        <taxon>Rickettsia</taxon>
        <taxon>spotted fever group</taxon>
    </lineage>
</organism>
<feature type="chain" id="PRO_1000202702" description="Peptide chain release factor 1">
    <location>
        <begin position="1"/>
        <end position="355"/>
    </location>
</feature>
<feature type="region of interest" description="Disordered" evidence="2">
    <location>
        <begin position="280"/>
        <end position="308"/>
    </location>
</feature>
<feature type="compositionally biased region" description="Basic and acidic residues" evidence="2">
    <location>
        <begin position="280"/>
        <end position="293"/>
    </location>
</feature>
<feature type="modified residue" description="N5-methylglutamine" evidence="1">
    <location>
        <position position="233"/>
    </location>
</feature>
<gene>
    <name evidence="1" type="primary">prfA</name>
    <name type="ordered locus">RPR_00110</name>
</gene>
<sequence length="355" mass="39738">MRFSDNLAKILDKYENLGNTLSSGIMGDEFVKASKEYAELEDVVAKIKEYNKAKSELEEANNFKLEVGLDNATLEMIEDEIYTLENSLPKLERAVKIALLPKDDADSKSAIIEVRAGSGGEEAALFAAVLFNMYQRYAELKGWRFEILAISDTGIGGYKEASASIKGKDVFSKLKFESGVHRVQRVPETESQGRIHTSAATVAVLPEAEEVDIKIEDKDLRIDTYRASGAGGQHVNTTDSAVRITHIPTGITVALQDEKSQHKNKAKALKILRARIYEEERRKKEQERADSRRGQVGSGDRSERIRTYNFPQGRVSDHRINLTLYKIDEVVKNGQLDEFVEALIADDEAKKLLEI</sequence>
<proteinExistence type="inferred from homology"/>
<comment type="function">
    <text evidence="1">Peptide chain release factor 1 directs the termination of translation in response to the peptide chain termination codons UAG and UAA.</text>
</comment>
<comment type="subcellular location">
    <subcellularLocation>
        <location evidence="1">Cytoplasm</location>
    </subcellularLocation>
</comment>
<comment type="PTM">
    <text evidence="1">Methylated by PrmC. Methylation increases the termination efficiency of RF1.</text>
</comment>
<comment type="similarity">
    <text evidence="1">Belongs to the prokaryotic/mitochondrial release factor family.</text>
</comment>
<name>RF1_RICPU</name>
<dbReference type="EMBL" id="CP001227">
    <property type="protein sequence ID" value="ACR47031.1"/>
    <property type="molecule type" value="Genomic_DNA"/>
</dbReference>
<dbReference type="RefSeq" id="WP_012736342.1">
    <property type="nucleotide sequence ID" value="NC_012730.1"/>
</dbReference>
<dbReference type="SMR" id="C4K0C9"/>
<dbReference type="KEGG" id="rpk:RPR_00110"/>
<dbReference type="HOGENOM" id="CLU_036856_0_1_5"/>
<dbReference type="Proteomes" id="UP000005015">
    <property type="component" value="Chromosome"/>
</dbReference>
<dbReference type="GO" id="GO:0005737">
    <property type="term" value="C:cytoplasm"/>
    <property type="evidence" value="ECO:0007669"/>
    <property type="project" value="UniProtKB-SubCell"/>
</dbReference>
<dbReference type="GO" id="GO:0016149">
    <property type="term" value="F:translation release factor activity, codon specific"/>
    <property type="evidence" value="ECO:0007669"/>
    <property type="project" value="UniProtKB-UniRule"/>
</dbReference>
<dbReference type="FunFam" id="3.30.160.20:FF:000004">
    <property type="entry name" value="Peptide chain release factor 1"/>
    <property type="match status" value="1"/>
</dbReference>
<dbReference type="FunFam" id="3.30.70.1660:FF:000002">
    <property type="entry name" value="Peptide chain release factor 1"/>
    <property type="match status" value="1"/>
</dbReference>
<dbReference type="FunFam" id="3.30.70.1660:FF:000004">
    <property type="entry name" value="Peptide chain release factor 1"/>
    <property type="match status" value="1"/>
</dbReference>
<dbReference type="Gene3D" id="3.30.160.20">
    <property type="match status" value="1"/>
</dbReference>
<dbReference type="Gene3D" id="3.30.70.1660">
    <property type="match status" value="1"/>
</dbReference>
<dbReference type="Gene3D" id="6.10.140.1950">
    <property type="match status" value="1"/>
</dbReference>
<dbReference type="HAMAP" id="MF_00093">
    <property type="entry name" value="Rel_fac_1"/>
    <property type="match status" value="1"/>
</dbReference>
<dbReference type="InterPro" id="IPR005139">
    <property type="entry name" value="PCRF"/>
</dbReference>
<dbReference type="InterPro" id="IPR000352">
    <property type="entry name" value="Pep_chain_release_fac_I"/>
</dbReference>
<dbReference type="InterPro" id="IPR045853">
    <property type="entry name" value="Pep_chain_release_fac_I_sf"/>
</dbReference>
<dbReference type="InterPro" id="IPR050057">
    <property type="entry name" value="Prokaryotic/Mito_RF"/>
</dbReference>
<dbReference type="InterPro" id="IPR004373">
    <property type="entry name" value="RF-1"/>
</dbReference>
<dbReference type="NCBIfam" id="TIGR00019">
    <property type="entry name" value="prfA"/>
    <property type="match status" value="1"/>
</dbReference>
<dbReference type="NCBIfam" id="NF001859">
    <property type="entry name" value="PRK00591.1"/>
    <property type="match status" value="1"/>
</dbReference>
<dbReference type="PANTHER" id="PTHR43804">
    <property type="entry name" value="LD18447P"/>
    <property type="match status" value="1"/>
</dbReference>
<dbReference type="PANTHER" id="PTHR43804:SF7">
    <property type="entry name" value="LD18447P"/>
    <property type="match status" value="1"/>
</dbReference>
<dbReference type="Pfam" id="PF03462">
    <property type="entry name" value="PCRF"/>
    <property type="match status" value="1"/>
</dbReference>
<dbReference type="Pfam" id="PF00472">
    <property type="entry name" value="RF-1"/>
    <property type="match status" value="1"/>
</dbReference>
<dbReference type="SMART" id="SM00937">
    <property type="entry name" value="PCRF"/>
    <property type="match status" value="1"/>
</dbReference>
<dbReference type="SUPFAM" id="SSF75620">
    <property type="entry name" value="Release factor"/>
    <property type="match status" value="1"/>
</dbReference>
<dbReference type="PROSITE" id="PS00745">
    <property type="entry name" value="RF_PROK_I"/>
    <property type="match status" value="1"/>
</dbReference>
<accession>C4K0C9</accession>
<reference key="1">
    <citation type="journal article" date="2009" name="PLoS ONE">
        <title>Genome sequence of the endosymbiont Rickettsia peacockii and comparison with virulent Rickettsia rickettsii: identification of virulence factors.</title>
        <authorList>
            <person name="Felsheim R.F."/>
            <person name="Kurtti T.J."/>
            <person name="Munderloh U.G."/>
        </authorList>
    </citation>
    <scope>NUCLEOTIDE SEQUENCE [LARGE SCALE GENOMIC DNA]</scope>
    <source>
        <strain>Rustic</strain>
    </source>
</reference>